<sequence length="106" mass="11781">MNHFISGIPIHYYLILAMIIFTIGVAGVMVRRSAVLIFMSVELILNSVNLVFVTFSKALHQIDGEVVVFFVMAIAAAEAAIGLAIVIAIHRIKKTSYVDEMNLMKW</sequence>
<gene>
    <name evidence="1" type="primary">nuoK</name>
    <name type="ordered locus">LIC_12749</name>
</gene>
<comment type="function">
    <text evidence="1">NDH-1 shuttles electrons from NADH, via FMN and iron-sulfur (Fe-S) centers, to quinones in the respiratory chain. The immediate electron acceptor for the enzyme in this species is believed to be ubiquinone. Couples the redox reaction to proton translocation (for every two electrons transferred, four hydrogen ions are translocated across the cytoplasmic membrane), and thus conserves the redox energy in a proton gradient.</text>
</comment>
<comment type="catalytic activity">
    <reaction evidence="1">
        <text>a quinone + NADH + 5 H(+)(in) = a quinol + NAD(+) + 4 H(+)(out)</text>
        <dbReference type="Rhea" id="RHEA:57888"/>
        <dbReference type="ChEBI" id="CHEBI:15378"/>
        <dbReference type="ChEBI" id="CHEBI:24646"/>
        <dbReference type="ChEBI" id="CHEBI:57540"/>
        <dbReference type="ChEBI" id="CHEBI:57945"/>
        <dbReference type="ChEBI" id="CHEBI:132124"/>
    </reaction>
</comment>
<comment type="subunit">
    <text evidence="1">NDH-1 is composed of 14 different subunits. Subunits NuoA, H, J, K, L, M, N constitute the membrane sector of the complex.</text>
</comment>
<comment type="subcellular location">
    <subcellularLocation>
        <location evidence="1">Cell inner membrane</location>
        <topology evidence="1">Multi-pass membrane protein</topology>
    </subcellularLocation>
</comment>
<comment type="similarity">
    <text evidence="1">Belongs to the complex I subunit 4L family.</text>
</comment>
<evidence type="ECO:0000255" key="1">
    <source>
        <dbReference type="HAMAP-Rule" id="MF_01456"/>
    </source>
</evidence>
<feature type="chain" id="PRO_0000390112" description="NADH-quinone oxidoreductase subunit K">
    <location>
        <begin position="1"/>
        <end position="106"/>
    </location>
</feature>
<feature type="transmembrane region" description="Helical" evidence="1">
    <location>
        <begin position="10"/>
        <end position="30"/>
    </location>
</feature>
<feature type="transmembrane region" description="Helical" evidence="1">
    <location>
        <begin position="35"/>
        <end position="55"/>
    </location>
</feature>
<feature type="transmembrane region" description="Helical" evidence="1">
    <location>
        <begin position="67"/>
        <end position="87"/>
    </location>
</feature>
<dbReference type="EC" id="7.1.1.-" evidence="1"/>
<dbReference type="EMBL" id="AE016823">
    <property type="protein sequence ID" value="AAS71306.1"/>
    <property type="molecule type" value="Genomic_DNA"/>
</dbReference>
<dbReference type="RefSeq" id="WP_001015281.1">
    <property type="nucleotide sequence ID" value="NC_005823.1"/>
</dbReference>
<dbReference type="SMR" id="Q72NT0"/>
<dbReference type="GeneID" id="61142627"/>
<dbReference type="KEGG" id="lic:LIC_12749"/>
<dbReference type="HOGENOM" id="CLU_144724_0_0_12"/>
<dbReference type="Proteomes" id="UP000007037">
    <property type="component" value="Chromosome I"/>
</dbReference>
<dbReference type="GO" id="GO:0030964">
    <property type="term" value="C:NADH dehydrogenase complex"/>
    <property type="evidence" value="ECO:0007669"/>
    <property type="project" value="TreeGrafter"/>
</dbReference>
<dbReference type="GO" id="GO:0005886">
    <property type="term" value="C:plasma membrane"/>
    <property type="evidence" value="ECO:0007669"/>
    <property type="project" value="UniProtKB-SubCell"/>
</dbReference>
<dbReference type="GO" id="GO:0050136">
    <property type="term" value="F:NADH:ubiquinone reductase (non-electrogenic) activity"/>
    <property type="evidence" value="ECO:0007669"/>
    <property type="project" value="UniProtKB-UniRule"/>
</dbReference>
<dbReference type="GO" id="GO:0048038">
    <property type="term" value="F:quinone binding"/>
    <property type="evidence" value="ECO:0007669"/>
    <property type="project" value="UniProtKB-KW"/>
</dbReference>
<dbReference type="GO" id="GO:0042773">
    <property type="term" value="P:ATP synthesis coupled electron transport"/>
    <property type="evidence" value="ECO:0007669"/>
    <property type="project" value="InterPro"/>
</dbReference>
<dbReference type="FunFam" id="1.10.287.3510:FF:000001">
    <property type="entry name" value="NADH-quinone oxidoreductase subunit K"/>
    <property type="match status" value="1"/>
</dbReference>
<dbReference type="Gene3D" id="1.10.287.3510">
    <property type="match status" value="1"/>
</dbReference>
<dbReference type="HAMAP" id="MF_01456">
    <property type="entry name" value="NDH1_NuoK"/>
    <property type="match status" value="1"/>
</dbReference>
<dbReference type="InterPro" id="IPR001133">
    <property type="entry name" value="NADH_UbQ_OxRdtase_chain4L/K"/>
</dbReference>
<dbReference type="InterPro" id="IPR039428">
    <property type="entry name" value="NUOK/Mnh_C1-like"/>
</dbReference>
<dbReference type="NCBIfam" id="NF004320">
    <property type="entry name" value="PRK05715.1-2"/>
    <property type="match status" value="1"/>
</dbReference>
<dbReference type="NCBIfam" id="NF004321">
    <property type="entry name" value="PRK05715.1-3"/>
    <property type="match status" value="1"/>
</dbReference>
<dbReference type="PANTHER" id="PTHR11434:SF21">
    <property type="entry name" value="NADH DEHYDROGENASE SUBUNIT 4L-RELATED"/>
    <property type="match status" value="1"/>
</dbReference>
<dbReference type="PANTHER" id="PTHR11434">
    <property type="entry name" value="NADH-UBIQUINONE OXIDOREDUCTASE SUBUNIT ND4L"/>
    <property type="match status" value="1"/>
</dbReference>
<dbReference type="Pfam" id="PF00420">
    <property type="entry name" value="Oxidored_q2"/>
    <property type="match status" value="1"/>
</dbReference>
<reference key="1">
    <citation type="journal article" date="2004" name="J. Bacteriol.">
        <title>Comparative genomics of two Leptospira interrogans serovars reveals novel insights into physiology and pathogenesis.</title>
        <authorList>
            <person name="Nascimento A.L.T.O."/>
            <person name="Ko A.I."/>
            <person name="Martins E.A.L."/>
            <person name="Monteiro-Vitorello C.B."/>
            <person name="Ho P.L."/>
            <person name="Haake D.A."/>
            <person name="Verjovski-Almeida S."/>
            <person name="Hartskeerl R.A."/>
            <person name="Marques M.V."/>
            <person name="Oliveira M.C."/>
            <person name="Menck C.F.M."/>
            <person name="Leite L.C.C."/>
            <person name="Carrer H."/>
            <person name="Coutinho L.L."/>
            <person name="Degrave W.M."/>
            <person name="Dellagostin O.A."/>
            <person name="El-Dorry H."/>
            <person name="Ferro E.S."/>
            <person name="Ferro M.I.T."/>
            <person name="Furlan L.R."/>
            <person name="Gamberini M."/>
            <person name="Giglioti E.A."/>
            <person name="Goes-Neto A."/>
            <person name="Goldman G.H."/>
            <person name="Goldman M.H.S."/>
            <person name="Harakava R."/>
            <person name="Jeronimo S.M.B."/>
            <person name="Junqueira-de-Azevedo I.L.M."/>
            <person name="Kimura E.T."/>
            <person name="Kuramae E.E."/>
            <person name="Lemos E.G.M."/>
            <person name="Lemos M.V.F."/>
            <person name="Marino C.L."/>
            <person name="Nunes L.R."/>
            <person name="de Oliveira R.C."/>
            <person name="Pereira G.G."/>
            <person name="Reis M.S."/>
            <person name="Schriefer A."/>
            <person name="Siqueira W.J."/>
            <person name="Sommer P."/>
            <person name="Tsai S.M."/>
            <person name="Simpson A.J.G."/>
            <person name="Ferro J.A."/>
            <person name="Camargo L.E.A."/>
            <person name="Kitajima J.P."/>
            <person name="Setubal J.C."/>
            <person name="Van Sluys M.A."/>
        </authorList>
    </citation>
    <scope>NUCLEOTIDE SEQUENCE [LARGE SCALE GENOMIC DNA]</scope>
    <source>
        <strain>Fiocruz L1-130</strain>
    </source>
</reference>
<proteinExistence type="inferred from homology"/>
<organism>
    <name type="scientific">Leptospira interrogans serogroup Icterohaemorrhagiae serovar copenhageni (strain Fiocruz L1-130)</name>
    <dbReference type="NCBI Taxonomy" id="267671"/>
    <lineage>
        <taxon>Bacteria</taxon>
        <taxon>Pseudomonadati</taxon>
        <taxon>Spirochaetota</taxon>
        <taxon>Spirochaetia</taxon>
        <taxon>Leptospirales</taxon>
        <taxon>Leptospiraceae</taxon>
        <taxon>Leptospira</taxon>
    </lineage>
</organism>
<accession>Q72NT0</accession>
<keyword id="KW-0997">Cell inner membrane</keyword>
<keyword id="KW-1003">Cell membrane</keyword>
<keyword id="KW-0472">Membrane</keyword>
<keyword id="KW-0520">NAD</keyword>
<keyword id="KW-0874">Quinone</keyword>
<keyword id="KW-1278">Translocase</keyword>
<keyword id="KW-0812">Transmembrane</keyword>
<keyword id="KW-1133">Transmembrane helix</keyword>
<keyword id="KW-0813">Transport</keyword>
<keyword id="KW-0830">Ubiquinone</keyword>
<name>NUOK_LEPIC</name>
<protein>
    <recommendedName>
        <fullName evidence="1">NADH-quinone oxidoreductase subunit K</fullName>
        <ecNumber evidence="1">7.1.1.-</ecNumber>
    </recommendedName>
    <alternativeName>
        <fullName evidence="1">NADH dehydrogenase I subunit K</fullName>
    </alternativeName>
    <alternativeName>
        <fullName evidence="1">NDH-1 subunit K</fullName>
    </alternativeName>
</protein>